<sequence>MEFNNSVSTIYWSLLERKFSIYVLTFLNRLKCILSNPFSISFSNNKYPSFFNANKTFLKRDSCNLFPNQSNIMFFLVVLSKRLCPNYFNNTGEKKNRGDNINDSSGNRFIDESYVSARKSMSKESNKIKQMNRKLAWIEATLNDLDIWRHSYSVFSSSTKMENNLEQQFSVLESKDTPITMMAYESISLVPRSITRTLSRFKTELMGDSNSLILNEFRLAKYQALASIQYIGCLLFILSIISMLSKTMFLKSWITNWWNTSQSHIFLNLFQEERALKELQEMEELLWLDRVMADYVKDQSQDLDIEIYEETIQLVTIYNEDSIQIILHLLTDIISIVTLIVLFIIGRKRLAVLNSWIQELFYSLSDTMKAFSILLLTDLCIGFHSPHGWEIVIGSFLEHLGFSHNKHIISCFVSTFPVILDTVFKYWIFRHLNRISPSIVATYHTMNE</sequence>
<evidence type="ECO:0000255" key="1">
    <source>
        <dbReference type="HAMAP-Rule" id="MF_01308"/>
    </source>
</evidence>
<evidence type="ECO:0000305" key="2"/>
<feature type="chain" id="PRO_0000293510" description="Potassium/proton antiporter CemA">
    <location>
        <begin position="1"/>
        <end position="448"/>
    </location>
</feature>
<feature type="transmembrane region" description="Helical" evidence="1">
    <location>
        <begin position="224"/>
        <end position="244"/>
    </location>
</feature>
<feature type="transmembrane region" description="Helical" evidence="1">
    <location>
        <begin position="325"/>
        <end position="345"/>
    </location>
</feature>
<feature type="transmembrane region" description="Helical" evidence="1">
    <location>
        <begin position="373"/>
        <end position="393"/>
    </location>
</feature>
<feature type="transmembrane region" description="Helical" evidence="1">
    <location>
        <begin position="408"/>
        <end position="428"/>
    </location>
</feature>
<dbReference type="EMBL" id="DQ821119">
    <property type="protein sequence ID" value="ABG79612.1"/>
    <property type="molecule type" value="Genomic_DNA"/>
</dbReference>
<dbReference type="RefSeq" id="YP_001023713.1">
    <property type="nucleotide sequence ID" value="NC_008829.1"/>
</dbReference>
<dbReference type="SMR" id="A2T345"/>
<dbReference type="GeneID" id="4788197"/>
<dbReference type="GO" id="GO:0009706">
    <property type="term" value="C:chloroplast inner membrane"/>
    <property type="evidence" value="ECO:0007669"/>
    <property type="project" value="UniProtKB-SubCell"/>
</dbReference>
<dbReference type="GO" id="GO:0015297">
    <property type="term" value="F:antiporter activity"/>
    <property type="evidence" value="ECO:0007669"/>
    <property type="project" value="UniProtKB-KW"/>
</dbReference>
<dbReference type="GO" id="GO:0015078">
    <property type="term" value="F:proton transmembrane transporter activity"/>
    <property type="evidence" value="ECO:0007669"/>
    <property type="project" value="UniProtKB-UniRule"/>
</dbReference>
<dbReference type="GO" id="GO:0006813">
    <property type="term" value="P:potassium ion transport"/>
    <property type="evidence" value="ECO:0007669"/>
    <property type="project" value="UniProtKB-UniRule"/>
</dbReference>
<dbReference type="HAMAP" id="MF_01308">
    <property type="entry name" value="CemA_PxcA"/>
    <property type="match status" value="1"/>
</dbReference>
<dbReference type="InterPro" id="IPR004282">
    <property type="entry name" value="CemA"/>
</dbReference>
<dbReference type="PANTHER" id="PTHR33650:SF2">
    <property type="entry name" value="CHLOROPLAST ENVELOPE MEMBRANE PROTEIN"/>
    <property type="match status" value="1"/>
</dbReference>
<dbReference type="PANTHER" id="PTHR33650">
    <property type="entry name" value="CHLOROPLAST ENVELOPE MEMBRANE PROTEIN-RELATED"/>
    <property type="match status" value="1"/>
</dbReference>
<dbReference type="Pfam" id="PF03040">
    <property type="entry name" value="CemA"/>
    <property type="match status" value="1"/>
</dbReference>
<comment type="function">
    <text evidence="1">Contributes to K(+)/H(+) antiport activity by supporting proton efflux to control proton extrusion and homeostasis in chloroplasts in a light-dependent manner to modulate photosynthesis. Prevents excessive induction of non-photochemical quenching (NPQ) under continuous-light conditions. Indirectly promotes efficient inorganic carbon uptake into chloroplasts.</text>
</comment>
<comment type="catalytic activity">
    <reaction evidence="1">
        <text>K(+)(in) + H(+)(out) = K(+)(out) + H(+)(in)</text>
        <dbReference type="Rhea" id="RHEA:29467"/>
        <dbReference type="ChEBI" id="CHEBI:15378"/>
        <dbReference type="ChEBI" id="CHEBI:29103"/>
    </reaction>
</comment>
<comment type="subcellular location">
    <subcellularLocation>
        <location evidence="1">Plastid</location>
        <location evidence="1">Chloroplast inner membrane</location>
        <topology evidence="1">Multi-pass membrane protein</topology>
    </subcellularLocation>
</comment>
<comment type="similarity">
    <text evidence="1 2">Belongs to the CemA family.</text>
</comment>
<keyword id="KW-0050">Antiport</keyword>
<keyword id="KW-0150">Chloroplast</keyword>
<keyword id="KW-0375">Hydrogen ion transport</keyword>
<keyword id="KW-0406">Ion transport</keyword>
<keyword id="KW-0472">Membrane</keyword>
<keyword id="KW-0934">Plastid</keyword>
<keyword id="KW-1001">Plastid inner membrane</keyword>
<keyword id="KW-0630">Potassium</keyword>
<keyword id="KW-0633">Potassium transport</keyword>
<keyword id="KW-0812">Transmembrane</keyword>
<keyword id="KW-1133">Transmembrane helix</keyword>
<keyword id="KW-0813">Transport</keyword>
<accession>A2T345</accession>
<organism>
    <name type="scientific">Angiopteris evecta</name>
    <name type="common">Mule's foot fern</name>
    <name type="synonym">Polypodium evectum</name>
    <dbReference type="NCBI Taxonomy" id="13825"/>
    <lineage>
        <taxon>Eukaryota</taxon>
        <taxon>Viridiplantae</taxon>
        <taxon>Streptophyta</taxon>
        <taxon>Embryophyta</taxon>
        <taxon>Tracheophyta</taxon>
        <taxon>Polypodiopsida</taxon>
        <taxon>Marattiidae</taxon>
        <taxon>Marattiales</taxon>
        <taxon>Marattiaceae</taxon>
        <taxon>Angiopteris</taxon>
    </lineage>
</organism>
<geneLocation type="chloroplast"/>
<name>CEMA_ANGEV</name>
<protein>
    <recommendedName>
        <fullName evidence="1">Potassium/proton antiporter CemA</fullName>
    </recommendedName>
    <alternativeName>
        <fullName evidence="1">Chloroplast envelope membrane protein A</fullName>
        <shortName evidence="1">CemA</shortName>
    </alternativeName>
</protein>
<proteinExistence type="inferred from homology"/>
<reference key="1">
    <citation type="journal article" date="2007" name="Am. Fern J.">
        <title>The complete plastid genome sequence of Angiopteris evecta (G. Forst.) Hoffm. (Marattiaceae).</title>
        <authorList>
            <person name="Roper J.M."/>
            <person name="Hansen S.K."/>
            <person name="Wolf P.G."/>
            <person name="Karol K.G."/>
            <person name="Mandoli D.F."/>
            <person name="Everett K.D.E."/>
            <person name="Kuehl J.V."/>
            <person name="Boore J.L."/>
        </authorList>
    </citation>
    <scope>NUCLEOTIDE SEQUENCE [LARGE SCALE GENOMIC DNA]</scope>
</reference>
<gene>
    <name evidence="1" type="primary">cemA</name>
</gene>